<reference key="1">
    <citation type="journal article" date="1993" name="Mol. Cell. Biol.">
        <title>AFR1 acts in conjunction with the alpha-factor receptor to promote morphogenesis and adaptation.</title>
        <authorList>
            <person name="Konopka J.B."/>
        </authorList>
    </citation>
    <scope>NUCLEOTIDE SEQUENCE</scope>
    <source>
        <strain>ATCC 204508 / S288c</strain>
    </source>
</reference>
<reference key="2">
    <citation type="journal article" date="1997" name="Nature">
        <title>The nucleotide sequence of Saccharomyces cerevisiae chromosome IV.</title>
        <authorList>
            <person name="Jacq C."/>
            <person name="Alt-Moerbe J."/>
            <person name="Andre B."/>
            <person name="Arnold W."/>
            <person name="Bahr A."/>
            <person name="Ballesta J.P.G."/>
            <person name="Bargues M."/>
            <person name="Baron L."/>
            <person name="Becker A."/>
            <person name="Biteau N."/>
            <person name="Bloecker H."/>
            <person name="Blugeon C."/>
            <person name="Boskovic J."/>
            <person name="Brandt P."/>
            <person name="Brueckner M."/>
            <person name="Buitrago M.J."/>
            <person name="Coster F."/>
            <person name="Delaveau T."/>
            <person name="del Rey F."/>
            <person name="Dujon B."/>
            <person name="Eide L.G."/>
            <person name="Garcia-Cantalejo J.M."/>
            <person name="Goffeau A."/>
            <person name="Gomez-Peris A."/>
            <person name="Granotier C."/>
            <person name="Hanemann V."/>
            <person name="Hankeln T."/>
            <person name="Hoheisel J.D."/>
            <person name="Jaeger W."/>
            <person name="Jimenez A."/>
            <person name="Jonniaux J.-L."/>
            <person name="Kraemer C."/>
            <person name="Kuester H."/>
            <person name="Laamanen P."/>
            <person name="Legros Y."/>
            <person name="Louis E.J."/>
            <person name="Moeller-Rieker S."/>
            <person name="Monnet A."/>
            <person name="Moro M."/>
            <person name="Mueller-Auer S."/>
            <person name="Nussbaumer B."/>
            <person name="Paricio N."/>
            <person name="Paulin L."/>
            <person name="Perea J."/>
            <person name="Perez-Alonso M."/>
            <person name="Perez-Ortin J.E."/>
            <person name="Pohl T.M."/>
            <person name="Prydz H."/>
            <person name="Purnelle B."/>
            <person name="Rasmussen S.W."/>
            <person name="Remacha M.A."/>
            <person name="Revuelta J.L."/>
            <person name="Rieger M."/>
            <person name="Salom D."/>
            <person name="Saluz H.P."/>
            <person name="Saiz J.E."/>
            <person name="Saren A.-M."/>
            <person name="Schaefer M."/>
            <person name="Scharfe M."/>
            <person name="Schmidt E.R."/>
            <person name="Schneider C."/>
            <person name="Scholler P."/>
            <person name="Schwarz S."/>
            <person name="Soler-Mira A."/>
            <person name="Urrestarazu L.A."/>
            <person name="Verhasselt P."/>
            <person name="Vissers S."/>
            <person name="Voet M."/>
            <person name="Volckaert G."/>
            <person name="Wagner G."/>
            <person name="Wambutt R."/>
            <person name="Wedler E."/>
            <person name="Wedler H."/>
            <person name="Woelfl S."/>
            <person name="Harris D.E."/>
            <person name="Bowman S."/>
            <person name="Brown D."/>
            <person name="Churcher C.M."/>
            <person name="Connor R."/>
            <person name="Dedman K."/>
            <person name="Gentles S."/>
            <person name="Hamlin N."/>
            <person name="Hunt S."/>
            <person name="Jones L."/>
            <person name="McDonald S."/>
            <person name="Murphy L.D."/>
            <person name="Niblett D."/>
            <person name="Odell C."/>
            <person name="Oliver K."/>
            <person name="Rajandream M.A."/>
            <person name="Richards C."/>
            <person name="Shore L."/>
            <person name="Walsh S.V."/>
            <person name="Barrell B.G."/>
            <person name="Dietrich F.S."/>
            <person name="Mulligan J.T."/>
            <person name="Allen E."/>
            <person name="Araujo R."/>
            <person name="Aviles E."/>
            <person name="Berno A."/>
            <person name="Carpenter J."/>
            <person name="Chen E."/>
            <person name="Cherry J.M."/>
            <person name="Chung E."/>
            <person name="Duncan M."/>
            <person name="Hunicke-Smith S."/>
            <person name="Hyman R.W."/>
            <person name="Komp C."/>
            <person name="Lashkari D."/>
            <person name="Lew H."/>
            <person name="Lin D."/>
            <person name="Mosedale D."/>
            <person name="Nakahara K."/>
            <person name="Namath A."/>
            <person name="Oefner P."/>
            <person name="Oh C."/>
            <person name="Petel F.X."/>
            <person name="Roberts D."/>
            <person name="Schramm S."/>
            <person name="Schroeder M."/>
            <person name="Shogren T."/>
            <person name="Shroff N."/>
            <person name="Winant A."/>
            <person name="Yelton M.A."/>
            <person name="Botstein D."/>
            <person name="Davis R.W."/>
            <person name="Johnston M."/>
            <person name="Andrews S."/>
            <person name="Brinkman R."/>
            <person name="Cooper J."/>
            <person name="Ding H."/>
            <person name="Du Z."/>
            <person name="Favello A."/>
            <person name="Fulton L."/>
            <person name="Gattung S."/>
            <person name="Greco T."/>
            <person name="Hallsworth K."/>
            <person name="Hawkins J."/>
            <person name="Hillier L.W."/>
            <person name="Jier M."/>
            <person name="Johnson D."/>
            <person name="Johnston L."/>
            <person name="Kirsten J."/>
            <person name="Kucaba T."/>
            <person name="Langston Y."/>
            <person name="Latreille P."/>
            <person name="Le T."/>
            <person name="Mardis E."/>
            <person name="Menezes S."/>
            <person name="Miller N."/>
            <person name="Nhan M."/>
            <person name="Pauley A."/>
            <person name="Peluso D."/>
            <person name="Rifkin L."/>
            <person name="Riles L."/>
            <person name="Taich A."/>
            <person name="Trevaskis E."/>
            <person name="Vignati D."/>
            <person name="Wilcox L."/>
            <person name="Wohldman P."/>
            <person name="Vaudin M."/>
            <person name="Wilson R."/>
            <person name="Waterston R."/>
            <person name="Albermann K."/>
            <person name="Hani J."/>
            <person name="Heumann K."/>
            <person name="Kleine K."/>
            <person name="Mewes H.-W."/>
            <person name="Zollner A."/>
            <person name="Zaccaria P."/>
        </authorList>
    </citation>
    <scope>NUCLEOTIDE SEQUENCE [LARGE SCALE GENOMIC DNA]</scope>
    <source>
        <strain>ATCC 204508 / S288c</strain>
    </source>
</reference>
<reference key="3">
    <citation type="journal article" date="2014" name="G3 (Bethesda)">
        <title>The reference genome sequence of Saccharomyces cerevisiae: Then and now.</title>
        <authorList>
            <person name="Engel S.R."/>
            <person name="Dietrich F.S."/>
            <person name="Fisk D.G."/>
            <person name="Binkley G."/>
            <person name="Balakrishnan R."/>
            <person name="Costanzo M.C."/>
            <person name="Dwight S.S."/>
            <person name="Hitz B.C."/>
            <person name="Karra K."/>
            <person name="Nash R.S."/>
            <person name="Weng S."/>
            <person name="Wong E.D."/>
            <person name="Lloyd P."/>
            <person name="Skrzypek M.S."/>
            <person name="Miyasato S.R."/>
            <person name="Simison M."/>
            <person name="Cherry J.M."/>
        </authorList>
    </citation>
    <scope>GENOME REANNOTATION</scope>
    <source>
        <strain>ATCC 204508 / S288c</strain>
    </source>
</reference>
<reference key="4">
    <citation type="journal article" date="2007" name="Genome Res.">
        <title>Approaching a complete repository of sequence-verified protein-encoding clones for Saccharomyces cerevisiae.</title>
        <authorList>
            <person name="Hu Y."/>
            <person name="Rolfs A."/>
            <person name="Bhullar B."/>
            <person name="Murthy T.V.S."/>
            <person name="Zhu C."/>
            <person name="Berger M.F."/>
            <person name="Camargo A.A."/>
            <person name="Kelley F."/>
            <person name="McCarron S."/>
            <person name="Jepson D."/>
            <person name="Richardson A."/>
            <person name="Raphael J."/>
            <person name="Moreira D."/>
            <person name="Taycher E."/>
            <person name="Zuo D."/>
            <person name="Mohr S."/>
            <person name="Kane M.F."/>
            <person name="Williamson J."/>
            <person name="Simpson A.J.G."/>
            <person name="Bulyk M.L."/>
            <person name="Harlow E."/>
            <person name="Marsischky G."/>
            <person name="Kolodner R.D."/>
            <person name="LaBaer J."/>
        </authorList>
    </citation>
    <scope>NUCLEOTIDE SEQUENCE [GENOMIC DNA]</scope>
    <source>
        <strain>ATCC 204508 / S288c</strain>
    </source>
</reference>
<reference key="5">
    <citation type="journal article" date="2007" name="J. Proteome Res.">
        <title>Large-scale phosphorylation analysis of alpha-factor-arrested Saccharomyces cerevisiae.</title>
        <authorList>
            <person name="Li X."/>
            <person name="Gerber S.A."/>
            <person name="Rudner A.D."/>
            <person name="Beausoleil S.A."/>
            <person name="Haas W."/>
            <person name="Villen J."/>
            <person name="Elias J.E."/>
            <person name="Gygi S.P."/>
        </authorList>
    </citation>
    <scope>PHOSPHORYLATION [LARGE SCALE ANALYSIS] AT SER-472 AND SER-526</scope>
    <scope>IDENTIFICATION BY MASS SPECTROMETRY [LARGE SCALE ANALYSIS]</scope>
    <source>
        <strain>ADR376</strain>
    </source>
</reference>
<reference key="6">
    <citation type="journal article" date="2009" name="Science">
        <title>Global analysis of Cdk1 substrate phosphorylation sites provides insights into evolution.</title>
        <authorList>
            <person name="Holt L.J."/>
            <person name="Tuch B.B."/>
            <person name="Villen J."/>
            <person name="Johnson A.D."/>
            <person name="Gygi S.P."/>
            <person name="Morgan D.O."/>
        </authorList>
    </citation>
    <scope>IDENTIFICATION BY MASS SPECTROMETRY [LARGE SCALE ANALYSIS]</scope>
</reference>
<evidence type="ECO:0000256" key="1">
    <source>
        <dbReference type="SAM" id="MobiDB-lite"/>
    </source>
</evidence>
<evidence type="ECO:0000305" key="2"/>
<evidence type="ECO:0007744" key="3">
    <source>
    </source>
</evidence>
<feature type="chain" id="PRO_0000064485" description="Protein AFR1">
    <location>
        <begin position="1"/>
        <end position="620"/>
    </location>
</feature>
<feature type="region of interest" description="Disordered" evidence="1">
    <location>
        <begin position="1"/>
        <end position="20"/>
    </location>
</feature>
<feature type="compositionally biased region" description="Polar residues" evidence="1">
    <location>
        <begin position="1"/>
        <end position="12"/>
    </location>
</feature>
<feature type="modified residue" description="Phosphoserine" evidence="3">
    <location>
        <position position="472"/>
    </location>
</feature>
<feature type="modified residue" description="Phosphoserine" evidence="3">
    <location>
        <position position="526"/>
    </location>
</feature>
<gene>
    <name type="primary">AFR1</name>
    <name type="ordered locus">YDR085C</name>
    <name type="ORF">D4471</name>
</gene>
<accession>P33304</accession>
<accession>D6VS72</accession>
<organism>
    <name type="scientific">Saccharomyces cerevisiae (strain ATCC 204508 / S288c)</name>
    <name type="common">Baker's yeast</name>
    <dbReference type="NCBI Taxonomy" id="559292"/>
    <lineage>
        <taxon>Eukaryota</taxon>
        <taxon>Fungi</taxon>
        <taxon>Dikarya</taxon>
        <taxon>Ascomycota</taxon>
        <taxon>Saccharomycotina</taxon>
        <taxon>Saccharomycetes</taxon>
        <taxon>Saccharomycetales</taxon>
        <taxon>Saccharomycetaceae</taxon>
        <taxon>Saccharomyces</taxon>
    </lineage>
</organism>
<proteinExistence type="evidence at protein level"/>
<keyword id="KW-0597">Phosphoprotein</keyword>
<keyword id="KW-1185">Reference proteome</keyword>
<protein>
    <recommendedName>
        <fullName>Protein AFR1</fullName>
    </recommendedName>
</protein>
<name>AFR1_YEAST</name>
<comment type="function">
    <text>Acts in conjunction with the alpha-factor receptor to promote morphogenesis and adaptation.</text>
</comment>
<comment type="induction">
    <text>By pheromone (alpha-factor).</text>
</comment>
<comment type="similarity">
    <text evidence="2">To yeast YER158C.</text>
</comment>
<dbReference type="EMBL" id="Z46796">
    <property type="protein sequence ID" value="CAA86807.1"/>
    <property type="molecule type" value="Genomic_DNA"/>
</dbReference>
<dbReference type="EMBL" id="L21702">
    <property type="protein sequence ID" value="AAC37365.1"/>
    <property type="molecule type" value="Unassigned_DNA"/>
</dbReference>
<dbReference type="EMBL" id="X82086">
    <property type="protein sequence ID" value="CAA57614.1"/>
    <property type="molecule type" value="Genomic_DNA"/>
</dbReference>
<dbReference type="EMBL" id="Z74381">
    <property type="protein sequence ID" value="CAA98905.1"/>
    <property type="molecule type" value="Genomic_DNA"/>
</dbReference>
<dbReference type="EMBL" id="AY723775">
    <property type="protein sequence ID" value="AAU09692.1"/>
    <property type="molecule type" value="Genomic_DNA"/>
</dbReference>
<dbReference type="EMBL" id="BK006938">
    <property type="protein sequence ID" value="DAA11932.1"/>
    <property type="molecule type" value="Genomic_DNA"/>
</dbReference>
<dbReference type="PIR" id="S48772">
    <property type="entry name" value="S48772"/>
</dbReference>
<dbReference type="RefSeq" id="NP_010370.1">
    <property type="nucleotide sequence ID" value="NM_001180393.1"/>
</dbReference>
<dbReference type="BioGRID" id="32141">
    <property type="interactions" value="46"/>
</dbReference>
<dbReference type="DIP" id="DIP-824N"/>
<dbReference type="FunCoup" id="P33304">
    <property type="interactions" value="158"/>
</dbReference>
<dbReference type="IntAct" id="P33304">
    <property type="interactions" value="7"/>
</dbReference>
<dbReference type="MINT" id="P33304"/>
<dbReference type="STRING" id="4932.YDR085C"/>
<dbReference type="iPTMnet" id="P33304"/>
<dbReference type="PaxDb" id="4932-YDR085C"/>
<dbReference type="PeptideAtlas" id="P33304"/>
<dbReference type="EnsemblFungi" id="YDR085C_mRNA">
    <property type="protein sequence ID" value="YDR085C"/>
    <property type="gene ID" value="YDR085C"/>
</dbReference>
<dbReference type="GeneID" id="851658"/>
<dbReference type="KEGG" id="sce:YDR085C"/>
<dbReference type="AGR" id="SGD:S000002492"/>
<dbReference type="SGD" id="S000002492">
    <property type="gene designation" value="AFR1"/>
</dbReference>
<dbReference type="VEuPathDB" id="FungiDB:YDR085C"/>
<dbReference type="eggNOG" id="ENOG502S3XF">
    <property type="taxonomic scope" value="Eukaryota"/>
</dbReference>
<dbReference type="HOGENOM" id="CLU_440893_0_0_1"/>
<dbReference type="InParanoid" id="P33304"/>
<dbReference type="OMA" id="ESARYFY"/>
<dbReference type="OrthoDB" id="5563016at2759"/>
<dbReference type="BioCyc" id="YEAST:G3O-29690-MONOMER"/>
<dbReference type="Reactome" id="R-SCE-114608">
    <property type="pathway name" value="Platelet degranulation"/>
</dbReference>
<dbReference type="BioGRID-ORCS" id="851658">
    <property type="hits" value="1 hit in 10 CRISPR screens"/>
</dbReference>
<dbReference type="PRO" id="PR:P33304"/>
<dbReference type="Proteomes" id="UP000002311">
    <property type="component" value="Chromosome IV"/>
</dbReference>
<dbReference type="RNAct" id="P33304">
    <property type="molecule type" value="protein"/>
</dbReference>
<dbReference type="GO" id="GO:0001400">
    <property type="term" value="C:mating projection base"/>
    <property type="evidence" value="ECO:0000314"/>
    <property type="project" value="SGD"/>
</dbReference>
<dbReference type="GO" id="GO:0005777">
    <property type="term" value="C:peroxisome"/>
    <property type="evidence" value="ECO:0000314"/>
    <property type="project" value="SGD"/>
</dbReference>
<dbReference type="GO" id="GO:0003779">
    <property type="term" value="F:actin binding"/>
    <property type="evidence" value="ECO:0000318"/>
    <property type="project" value="GO_Central"/>
</dbReference>
<dbReference type="GO" id="GO:0030036">
    <property type="term" value="P:actin cytoskeleton organization"/>
    <property type="evidence" value="ECO:0000318"/>
    <property type="project" value="GO_Central"/>
</dbReference>
<dbReference type="GO" id="GO:0000753">
    <property type="term" value="P:cell morphogenesis involved in conjugation with cellular fusion"/>
    <property type="evidence" value="ECO:0000315"/>
    <property type="project" value="SGD"/>
</dbReference>
<dbReference type="GO" id="GO:0007618">
    <property type="term" value="P:mating"/>
    <property type="evidence" value="ECO:0000315"/>
    <property type="project" value="SGD"/>
</dbReference>
<dbReference type="GO" id="GO:0097271">
    <property type="term" value="P:protein localization to bud neck"/>
    <property type="evidence" value="ECO:0000315"/>
    <property type="project" value="SGD"/>
</dbReference>
<dbReference type="GO" id="GO:0032185">
    <property type="term" value="P:septin cytoskeleton organization"/>
    <property type="evidence" value="ECO:0000315"/>
    <property type="project" value="SGD"/>
</dbReference>
<sequence length="620" mass="71364">MEGSYLSAQENQPIPERLIPRSNSTSNLFALSSTFSKLNVRNDADYNYSNPNKKRHIYSGEIDCRSVTAARKFPVRSCSMTAAQQRKRTALFTVRERNSYHEGFNNDQDYVSQYQKPQYTFGVYKELTPYQLQRSKMKRSFQFPNGEIYKPKLDGKCTHSLKKPELNSRDSSLFKFSEKKGRNLSKDFVGPHNGTSVIHIPPNDTGYGVNSLELNTSVPSTIKSSVSSTSPISAVNTLTSLPESQTDDDDGYENKTVTISYCFENTVNEKHGSHIEKLDLSTKEKTKPTTNSGLFDRKKKTILGTEKYRCIKSQSKLKLGSVLKKLWRTSGNSNTKHGKKDTKRRRIPIDDMVTHSDGNSEAENDIELMDANLDGIEFDDDETLMDTDSIFDDLLSKENDKYDLRRRQLEIRQKLHETSHNDDGKVSFRDTEKHNVNEGLIDKTIIEEFSKLGEYIIDTRNQPPPRSSKRPSLDDNESARYFYNISTDLRQSLSGPISLPMHVGNDMVNRLRNDWEYIRFEDRRNSLPDSSFDKVETPPKPIKKDVRFAKEVCLASTWSSNAYERANPEFIMNRHRLLWMMKVHPSMNSAMNEIKLELNSYKKNEMVVHENSKCFTHYLI</sequence>